<organism>
    <name type="scientific">Oleidesulfovibrio alaskensis (strain ATCC BAA-1058 / DSM 17464 / G20)</name>
    <name type="common">Desulfovibrio alaskensis</name>
    <dbReference type="NCBI Taxonomy" id="207559"/>
    <lineage>
        <taxon>Bacteria</taxon>
        <taxon>Pseudomonadati</taxon>
        <taxon>Thermodesulfobacteriota</taxon>
        <taxon>Desulfovibrionia</taxon>
        <taxon>Desulfovibrionales</taxon>
        <taxon>Desulfovibrionaceae</taxon>
        <taxon>Oleidesulfovibrio</taxon>
    </lineage>
</organism>
<reference key="1">
    <citation type="journal article" date="2011" name="J. Bacteriol.">
        <title>Complete genome sequence and updated annotation of Desulfovibrio alaskensis G20.</title>
        <authorList>
            <person name="Hauser L.J."/>
            <person name="Land M.L."/>
            <person name="Brown S.D."/>
            <person name="Larimer F."/>
            <person name="Keller K.L."/>
            <person name="Rapp-Giles B.J."/>
            <person name="Price M.N."/>
            <person name="Lin M."/>
            <person name="Bruce D.C."/>
            <person name="Detter J.C."/>
            <person name="Tapia R."/>
            <person name="Han C.S."/>
            <person name="Goodwin L.A."/>
            <person name="Cheng J.F."/>
            <person name="Pitluck S."/>
            <person name="Copeland A."/>
            <person name="Lucas S."/>
            <person name="Nolan M."/>
            <person name="Lapidus A.L."/>
            <person name="Palumbo A.V."/>
            <person name="Wall J.D."/>
        </authorList>
    </citation>
    <scope>NUCLEOTIDE SEQUENCE [LARGE SCALE GENOMIC DNA]</scope>
    <source>
        <strain>ATCC BAA-1058 / DSM 17464 / G20</strain>
    </source>
</reference>
<gene>
    <name evidence="1" type="primary">surE</name>
    <name type="ordered locus">Dde_2340</name>
</gene>
<accession>Q30YV9</accession>
<evidence type="ECO:0000255" key="1">
    <source>
        <dbReference type="HAMAP-Rule" id="MF_00060"/>
    </source>
</evidence>
<comment type="function">
    <text evidence="1">Nucleotidase that shows phosphatase activity on nucleoside 5'-monophosphates.</text>
</comment>
<comment type="catalytic activity">
    <reaction evidence="1">
        <text>a ribonucleoside 5'-phosphate + H2O = a ribonucleoside + phosphate</text>
        <dbReference type="Rhea" id="RHEA:12484"/>
        <dbReference type="ChEBI" id="CHEBI:15377"/>
        <dbReference type="ChEBI" id="CHEBI:18254"/>
        <dbReference type="ChEBI" id="CHEBI:43474"/>
        <dbReference type="ChEBI" id="CHEBI:58043"/>
        <dbReference type="EC" id="3.1.3.5"/>
    </reaction>
</comment>
<comment type="cofactor">
    <cofactor evidence="1">
        <name>a divalent metal cation</name>
        <dbReference type="ChEBI" id="CHEBI:60240"/>
    </cofactor>
    <text evidence="1">Binds 1 divalent metal cation per subunit.</text>
</comment>
<comment type="subcellular location">
    <subcellularLocation>
        <location evidence="1">Cytoplasm</location>
    </subcellularLocation>
</comment>
<comment type="similarity">
    <text evidence="1">Belongs to the SurE nucleotidase family.</text>
</comment>
<feature type="chain" id="PRO_0000235611" description="5'-nucleotidase SurE">
    <location>
        <begin position="1"/>
        <end position="259"/>
    </location>
</feature>
<feature type="binding site" evidence="1">
    <location>
        <position position="8"/>
    </location>
    <ligand>
        <name>a divalent metal cation</name>
        <dbReference type="ChEBI" id="CHEBI:60240"/>
    </ligand>
</feature>
<feature type="binding site" evidence="1">
    <location>
        <position position="9"/>
    </location>
    <ligand>
        <name>a divalent metal cation</name>
        <dbReference type="ChEBI" id="CHEBI:60240"/>
    </ligand>
</feature>
<feature type="binding site" evidence="1">
    <location>
        <position position="40"/>
    </location>
    <ligand>
        <name>a divalent metal cation</name>
        <dbReference type="ChEBI" id="CHEBI:60240"/>
    </ligand>
</feature>
<feature type="binding site" evidence="1">
    <location>
        <position position="95"/>
    </location>
    <ligand>
        <name>a divalent metal cation</name>
        <dbReference type="ChEBI" id="CHEBI:60240"/>
    </ligand>
</feature>
<name>SURE_OLEA2</name>
<keyword id="KW-0963">Cytoplasm</keyword>
<keyword id="KW-0378">Hydrolase</keyword>
<keyword id="KW-0479">Metal-binding</keyword>
<keyword id="KW-0547">Nucleotide-binding</keyword>
<keyword id="KW-1185">Reference proteome</keyword>
<proteinExistence type="inferred from homology"/>
<dbReference type="EC" id="3.1.3.5" evidence="1"/>
<dbReference type="EMBL" id="CP000112">
    <property type="protein sequence ID" value="ABB39137.1"/>
    <property type="molecule type" value="Genomic_DNA"/>
</dbReference>
<dbReference type="RefSeq" id="WP_011368214.1">
    <property type="nucleotide sequence ID" value="NC_007519.1"/>
</dbReference>
<dbReference type="SMR" id="Q30YV9"/>
<dbReference type="STRING" id="207559.Dde_2340"/>
<dbReference type="KEGG" id="dde:Dde_2340"/>
<dbReference type="eggNOG" id="COG0496">
    <property type="taxonomic scope" value="Bacteria"/>
</dbReference>
<dbReference type="HOGENOM" id="CLU_045192_1_2_7"/>
<dbReference type="Proteomes" id="UP000002710">
    <property type="component" value="Chromosome"/>
</dbReference>
<dbReference type="GO" id="GO:0005737">
    <property type="term" value="C:cytoplasm"/>
    <property type="evidence" value="ECO:0007669"/>
    <property type="project" value="UniProtKB-SubCell"/>
</dbReference>
<dbReference type="GO" id="GO:0008253">
    <property type="term" value="F:5'-nucleotidase activity"/>
    <property type="evidence" value="ECO:0007669"/>
    <property type="project" value="UniProtKB-UniRule"/>
</dbReference>
<dbReference type="GO" id="GO:0046872">
    <property type="term" value="F:metal ion binding"/>
    <property type="evidence" value="ECO:0007669"/>
    <property type="project" value="UniProtKB-UniRule"/>
</dbReference>
<dbReference type="GO" id="GO:0000166">
    <property type="term" value="F:nucleotide binding"/>
    <property type="evidence" value="ECO:0007669"/>
    <property type="project" value="UniProtKB-KW"/>
</dbReference>
<dbReference type="FunFam" id="3.40.1210.10:FF:000001">
    <property type="entry name" value="5'/3'-nucleotidase SurE"/>
    <property type="match status" value="1"/>
</dbReference>
<dbReference type="Gene3D" id="3.40.1210.10">
    <property type="entry name" value="Survival protein SurE-like phosphatase/nucleotidase"/>
    <property type="match status" value="1"/>
</dbReference>
<dbReference type="HAMAP" id="MF_00060">
    <property type="entry name" value="SurE"/>
    <property type="match status" value="1"/>
</dbReference>
<dbReference type="InterPro" id="IPR030048">
    <property type="entry name" value="SurE"/>
</dbReference>
<dbReference type="InterPro" id="IPR002828">
    <property type="entry name" value="SurE-like_Pase/nucleotidase"/>
</dbReference>
<dbReference type="InterPro" id="IPR036523">
    <property type="entry name" value="SurE-like_sf"/>
</dbReference>
<dbReference type="NCBIfam" id="NF001490">
    <property type="entry name" value="PRK00346.1-4"/>
    <property type="match status" value="1"/>
</dbReference>
<dbReference type="NCBIfam" id="TIGR00087">
    <property type="entry name" value="surE"/>
    <property type="match status" value="1"/>
</dbReference>
<dbReference type="PANTHER" id="PTHR30457">
    <property type="entry name" value="5'-NUCLEOTIDASE SURE"/>
    <property type="match status" value="1"/>
</dbReference>
<dbReference type="PANTHER" id="PTHR30457:SF0">
    <property type="entry name" value="PHOSPHATASE, PUTATIVE (AFU_ORTHOLOGUE AFUA_4G01070)-RELATED"/>
    <property type="match status" value="1"/>
</dbReference>
<dbReference type="Pfam" id="PF01975">
    <property type="entry name" value="SurE"/>
    <property type="match status" value="1"/>
</dbReference>
<dbReference type="SUPFAM" id="SSF64167">
    <property type="entry name" value="SurE-like"/>
    <property type="match status" value="1"/>
</dbReference>
<protein>
    <recommendedName>
        <fullName evidence="1">5'-nucleotidase SurE</fullName>
        <ecNumber evidence="1">3.1.3.5</ecNumber>
    </recommendedName>
    <alternativeName>
        <fullName evidence="1">Nucleoside 5'-monophosphate phosphohydrolase</fullName>
    </alternativeName>
</protein>
<sequence length="259" mass="28446">MFIALTNDDGIQAPGLRAMYKALKEAGHTVQVVAPVTEQSAVGHAVTIALPLRVKIFAENGFQGMGVYGTPTDCVKLGLNALLDKKPDIVVSGINAGANVGPDILYSGTVSAATEAAHMGYPSLAVSYDNFKPDDIAAHARFAVEIMESMPWQSLPPRCVLNLNLPDVPMQQCKGLTLCPQTRAVWKDWYDHRTDPRGNSYWWLNGIIPPETVAEGTDRDMLTRGYATLTPLRFDFTDRETLARLQQNMDRQRQGSEDL</sequence>